<feature type="chain" id="PRO_1000004792" description="Phosphomethylpyrimidine synthase">
    <location>
        <begin position="1"/>
        <end position="627"/>
    </location>
</feature>
<feature type="region of interest" description="Disordered" evidence="2">
    <location>
        <begin position="1"/>
        <end position="29"/>
    </location>
</feature>
<feature type="compositionally biased region" description="Polar residues" evidence="2">
    <location>
        <begin position="1"/>
        <end position="24"/>
    </location>
</feature>
<feature type="binding site" evidence="1">
    <location>
        <position position="231"/>
    </location>
    <ligand>
        <name>substrate</name>
    </ligand>
</feature>
<feature type="binding site" evidence="1">
    <location>
        <position position="260"/>
    </location>
    <ligand>
        <name>substrate</name>
    </ligand>
</feature>
<feature type="binding site" evidence="1">
    <location>
        <position position="289"/>
    </location>
    <ligand>
        <name>substrate</name>
    </ligand>
</feature>
<feature type="binding site" evidence="1">
    <location>
        <position position="325"/>
    </location>
    <ligand>
        <name>substrate</name>
    </ligand>
</feature>
<feature type="binding site" evidence="1">
    <location>
        <begin position="345"/>
        <end position="347"/>
    </location>
    <ligand>
        <name>substrate</name>
    </ligand>
</feature>
<feature type="binding site" evidence="1">
    <location>
        <begin position="386"/>
        <end position="389"/>
    </location>
    <ligand>
        <name>substrate</name>
    </ligand>
</feature>
<feature type="binding site" evidence="1">
    <location>
        <position position="425"/>
    </location>
    <ligand>
        <name>substrate</name>
    </ligand>
</feature>
<feature type="binding site" evidence="1">
    <location>
        <position position="429"/>
    </location>
    <ligand>
        <name>Zn(2+)</name>
        <dbReference type="ChEBI" id="CHEBI:29105"/>
    </ligand>
</feature>
<feature type="binding site" evidence="1">
    <location>
        <position position="452"/>
    </location>
    <ligand>
        <name>substrate</name>
    </ligand>
</feature>
<feature type="binding site" evidence="1">
    <location>
        <position position="493"/>
    </location>
    <ligand>
        <name>Zn(2+)</name>
        <dbReference type="ChEBI" id="CHEBI:29105"/>
    </ligand>
</feature>
<feature type="binding site" evidence="1">
    <location>
        <position position="573"/>
    </location>
    <ligand>
        <name>[4Fe-4S] cluster</name>
        <dbReference type="ChEBI" id="CHEBI:49883"/>
        <note>4Fe-4S-S-AdoMet</note>
    </ligand>
</feature>
<feature type="binding site" evidence="1">
    <location>
        <position position="576"/>
    </location>
    <ligand>
        <name>[4Fe-4S] cluster</name>
        <dbReference type="ChEBI" id="CHEBI:49883"/>
        <note>4Fe-4S-S-AdoMet</note>
    </ligand>
</feature>
<feature type="binding site" evidence="1">
    <location>
        <position position="581"/>
    </location>
    <ligand>
        <name>[4Fe-4S] cluster</name>
        <dbReference type="ChEBI" id="CHEBI:49883"/>
        <note>4Fe-4S-S-AdoMet</note>
    </ligand>
</feature>
<keyword id="KW-0004">4Fe-4S</keyword>
<keyword id="KW-0408">Iron</keyword>
<keyword id="KW-0411">Iron-sulfur</keyword>
<keyword id="KW-0456">Lyase</keyword>
<keyword id="KW-0479">Metal-binding</keyword>
<keyword id="KW-0949">S-adenosyl-L-methionine</keyword>
<keyword id="KW-0784">Thiamine biosynthesis</keyword>
<keyword id="KW-0862">Zinc</keyword>
<accession>A6VD86</accession>
<name>THIC_PSEP7</name>
<dbReference type="EC" id="4.1.99.17" evidence="1"/>
<dbReference type="EMBL" id="CP000744">
    <property type="protein sequence ID" value="ABR81450.1"/>
    <property type="molecule type" value="Genomic_DNA"/>
</dbReference>
<dbReference type="RefSeq" id="WP_012077657.1">
    <property type="nucleotide sequence ID" value="NC_009656.1"/>
</dbReference>
<dbReference type="SMR" id="A6VD86"/>
<dbReference type="GeneID" id="77223522"/>
<dbReference type="KEGG" id="pap:PSPA7_5702"/>
<dbReference type="HOGENOM" id="CLU_013181_2_1_6"/>
<dbReference type="UniPathway" id="UPA00060"/>
<dbReference type="Proteomes" id="UP000001582">
    <property type="component" value="Chromosome"/>
</dbReference>
<dbReference type="GO" id="GO:0005829">
    <property type="term" value="C:cytosol"/>
    <property type="evidence" value="ECO:0007669"/>
    <property type="project" value="TreeGrafter"/>
</dbReference>
<dbReference type="GO" id="GO:0051539">
    <property type="term" value="F:4 iron, 4 sulfur cluster binding"/>
    <property type="evidence" value="ECO:0007669"/>
    <property type="project" value="UniProtKB-KW"/>
</dbReference>
<dbReference type="GO" id="GO:0016830">
    <property type="term" value="F:carbon-carbon lyase activity"/>
    <property type="evidence" value="ECO:0007669"/>
    <property type="project" value="InterPro"/>
</dbReference>
<dbReference type="GO" id="GO:0008270">
    <property type="term" value="F:zinc ion binding"/>
    <property type="evidence" value="ECO:0007669"/>
    <property type="project" value="UniProtKB-UniRule"/>
</dbReference>
<dbReference type="GO" id="GO:0009228">
    <property type="term" value="P:thiamine biosynthetic process"/>
    <property type="evidence" value="ECO:0007669"/>
    <property type="project" value="UniProtKB-KW"/>
</dbReference>
<dbReference type="GO" id="GO:0009229">
    <property type="term" value="P:thiamine diphosphate biosynthetic process"/>
    <property type="evidence" value="ECO:0007669"/>
    <property type="project" value="UniProtKB-UniRule"/>
</dbReference>
<dbReference type="FunFam" id="3.20.20.540:FF:000001">
    <property type="entry name" value="Phosphomethylpyrimidine synthase"/>
    <property type="match status" value="1"/>
</dbReference>
<dbReference type="Gene3D" id="6.10.250.620">
    <property type="match status" value="1"/>
</dbReference>
<dbReference type="Gene3D" id="3.20.20.540">
    <property type="entry name" value="Radical SAM ThiC family, central domain"/>
    <property type="match status" value="1"/>
</dbReference>
<dbReference type="HAMAP" id="MF_00089">
    <property type="entry name" value="ThiC"/>
    <property type="match status" value="1"/>
</dbReference>
<dbReference type="InterPro" id="IPR037509">
    <property type="entry name" value="ThiC"/>
</dbReference>
<dbReference type="InterPro" id="IPR025747">
    <property type="entry name" value="ThiC-associated_dom"/>
</dbReference>
<dbReference type="InterPro" id="IPR038521">
    <property type="entry name" value="ThiC/Bza_core_dom"/>
</dbReference>
<dbReference type="InterPro" id="IPR002817">
    <property type="entry name" value="ThiC/BzaA/B"/>
</dbReference>
<dbReference type="NCBIfam" id="NF006763">
    <property type="entry name" value="PRK09284.1"/>
    <property type="match status" value="1"/>
</dbReference>
<dbReference type="NCBIfam" id="NF009895">
    <property type="entry name" value="PRK13352.1"/>
    <property type="match status" value="1"/>
</dbReference>
<dbReference type="NCBIfam" id="TIGR00190">
    <property type="entry name" value="thiC"/>
    <property type="match status" value="1"/>
</dbReference>
<dbReference type="PANTHER" id="PTHR30557:SF1">
    <property type="entry name" value="PHOSPHOMETHYLPYRIMIDINE SYNTHASE, CHLOROPLASTIC"/>
    <property type="match status" value="1"/>
</dbReference>
<dbReference type="PANTHER" id="PTHR30557">
    <property type="entry name" value="THIAMINE BIOSYNTHESIS PROTEIN THIC"/>
    <property type="match status" value="1"/>
</dbReference>
<dbReference type="Pfam" id="PF13667">
    <property type="entry name" value="ThiC-associated"/>
    <property type="match status" value="1"/>
</dbReference>
<dbReference type="Pfam" id="PF01964">
    <property type="entry name" value="ThiC_Rad_SAM"/>
    <property type="match status" value="1"/>
</dbReference>
<dbReference type="SFLD" id="SFLDF00407">
    <property type="entry name" value="phosphomethylpyrimidine_syntha"/>
    <property type="match status" value="1"/>
</dbReference>
<dbReference type="SFLD" id="SFLDG01114">
    <property type="entry name" value="phosphomethylpyrimidine_syntha"/>
    <property type="match status" value="1"/>
</dbReference>
<dbReference type="SFLD" id="SFLDS00113">
    <property type="entry name" value="Radical_SAM_Phosphomethylpyrim"/>
    <property type="match status" value="1"/>
</dbReference>
<evidence type="ECO:0000255" key="1">
    <source>
        <dbReference type="HAMAP-Rule" id="MF_00089"/>
    </source>
</evidence>
<evidence type="ECO:0000256" key="2">
    <source>
        <dbReference type="SAM" id="MobiDB-lite"/>
    </source>
</evidence>
<protein>
    <recommendedName>
        <fullName evidence="1">Phosphomethylpyrimidine synthase</fullName>
        <ecNumber evidence="1">4.1.99.17</ecNumber>
    </recommendedName>
    <alternativeName>
        <fullName evidence="1">Hydroxymethylpyrimidine phosphate synthase</fullName>
        <shortName evidence="1">HMP-P synthase</shortName>
        <shortName evidence="1">HMP-phosphate synthase</shortName>
        <shortName evidence="1">HMPP synthase</shortName>
    </alternativeName>
    <alternativeName>
        <fullName evidence="1">Thiamine biosynthesis protein ThiC</fullName>
    </alternativeName>
</protein>
<gene>
    <name evidence="1" type="primary">thiC</name>
    <name type="ordered locus">PSPA7_5702</name>
</gene>
<proteinExistence type="inferred from homology"/>
<reference key="1">
    <citation type="submission" date="2007-06" db="EMBL/GenBank/DDBJ databases">
        <authorList>
            <person name="Dodson R.J."/>
            <person name="Harkins D."/>
            <person name="Paulsen I.T."/>
        </authorList>
    </citation>
    <scope>NUCLEOTIDE SEQUENCE [LARGE SCALE GENOMIC DNA]</scope>
    <source>
        <strain>DSM 24068 / PA7</strain>
    </source>
</reference>
<comment type="function">
    <text evidence="1">Catalyzes the synthesis of the hydroxymethylpyrimidine phosphate (HMP-P) moiety of thiamine from aminoimidazole ribotide (AIR) in a radical S-adenosyl-L-methionine (SAM)-dependent reaction.</text>
</comment>
<comment type="catalytic activity">
    <reaction evidence="1">
        <text>5-amino-1-(5-phospho-beta-D-ribosyl)imidazole + S-adenosyl-L-methionine = 4-amino-2-methyl-5-(phosphooxymethyl)pyrimidine + CO + 5'-deoxyadenosine + formate + L-methionine + 3 H(+)</text>
        <dbReference type="Rhea" id="RHEA:24840"/>
        <dbReference type="ChEBI" id="CHEBI:15378"/>
        <dbReference type="ChEBI" id="CHEBI:15740"/>
        <dbReference type="ChEBI" id="CHEBI:17245"/>
        <dbReference type="ChEBI" id="CHEBI:17319"/>
        <dbReference type="ChEBI" id="CHEBI:57844"/>
        <dbReference type="ChEBI" id="CHEBI:58354"/>
        <dbReference type="ChEBI" id="CHEBI:59789"/>
        <dbReference type="ChEBI" id="CHEBI:137981"/>
        <dbReference type="EC" id="4.1.99.17"/>
    </reaction>
</comment>
<comment type="cofactor">
    <cofactor evidence="1">
        <name>[4Fe-4S] cluster</name>
        <dbReference type="ChEBI" id="CHEBI:49883"/>
    </cofactor>
    <text evidence="1">Binds 1 [4Fe-4S] cluster per subunit. The cluster is coordinated with 3 cysteines and an exchangeable S-adenosyl-L-methionine.</text>
</comment>
<comment type="pathway">
    <text evidence="1">Cofactor biosynthesis; thiamine diphosphate biosynthesis.</text>
</comment>
<comment type="subunit">
    <text evidence="1">Homodimer.</text>
</comment>
<comment type="similarity">
    <text evidence="1">Belongs to the ThiC family.</text>
</comment>
<organism>
    <name type="scientific">Pseudomonas paraeruginosa (strain DSM 24068 / PA7)</name>
    <name type="common">Pseudomonas aeruginosa (strain PA7)</name>
    <dbReference type="NCBI Taxonomy" id="381754"/>
    <lineage>
        <taxon>Bacteria</taxon>
        <taxon>Pseudomonadati</taxon>
        <taxon>Pseudomonadota</taxon>
        <taxon>Gammaproteobacteria</taxon>
        <taxon>Pseudomonadales</taxon>
        <taxon>Pseudomonadaceae</taxon>
        <taxon>Pseudomonas</taxon>
        <taxon>Pseudomonas paraeruginosa</taxon>
    </lineage>
</organism>
<sequence length="627" mass="69756">MSATQKNNITRLEQLDRQSTQPFPNSRKVYLTGSRPDIRVPVREISLADTPTAFGGEKNPPVFVYDTSGPYTDPEVRIDLRKGLPDVRSRWIDERGDTEILPGLTSEFGQARLADASLDALRFAHVRTPRRAKPGANVSQMHYAKKGIITPEMEYIAIRENMKLQEARAAGLLDQQHPGHSFGANIPKEITPEFVREEVARGRAIIPANINHTELEPMIIGRNFLVKINGNIGNSALGSSIEEEVEKLTWGIRWGADTVMDLSTGKHIHETREWILRNSPVPIGTVPIYQALEKVNGVAEDLTWEIFRDTLIEQAEQGVDYFTIHAGVLLRYVPLTAKRVTGIVSRGGSIMAKWCLAHHKENFLYTHFEEICEIMKAYDVSFSLGDGLRPGSVADANDAAQFGELETLGELTKIAWKHDVQVMIEGPGHVPMQLIKENMDKQLECCDEAPFYTLGPLTTDIAPGYDHITSGIGAAMIGWFGCAMLCYVTPKEHLGLPNKDDVKTGIITYKIAAHAADLAKGHPGAQIRDNALSKARFEFRWEDQFNLGLDPDTARAFHDETLPKDSAKVAHFCSMCGPKFCSMKITQEVRDYAKENGLSDESKAIEAGFQEQAARFKDEGSVIYKQV</sequence>